<proteinExistence type="inferred from homology"/>
<reference key="1">
    <citation type="journal article" date="2007" name="Theor. Appl. Genet.">
        <title>Complete chloroplast genome sequences of Hordeum vulgare, Sorghum bicolor and Agrostis stolonifera, and comparative analyses with other grass genomes.</title>
        <authorList>
            <person name="Saski C."/>
            <person name="Lee S.-B."/>
            <person name="Fjellheim S."/>
            <person name="Guda C."/>
            <person name="Jansen R.K."/>
            <person name="Luo H."/>
            <person name="Tomkins J."/>
            <person name="Rognli O.A."/>
            <person name="Daniell H."/>
            <person name="Clarke J.L."/>
        </authorList>
    </citation>
    <scope>NUCLEOTIDE SEQUENCE [LARGE SCALE GENOMIC DNA]</scope>
    <source>
        <strain>cv. BTx623</strain>
    </source>
</reference>
<organism>
    <name type="scientific">Sorghum bicolor</name>
    <name type="common">Sorghum</name>
    <name type="synonym">Sorghum vulgare</name>
    <dbReference type="NCBI Taxonomy" id="4558"/>
    <lineage>
        <taxon>Eukaryota</taxon>
        <taxon>Viridiplantae</taxon>
        <taxon>Streptophyta</taxon>
        <taxon>Embryophyta</taxon>
        <taxon>Tracheophyta</taxon>
        <taxon>Spermatophyta</taxon>
        <taxon>Magnoliopsida</taxon>
        <taxon>Liliopsida</taxon>
        <taxon>Poales</taxon>
        <taxon>Poaceae</taxon>
        <taxon>PACMAD clade</taxon>
        <taxon>Panicoideae</taxon>
        <taxon>Andropogonodae</taxon>
        <taxon>Andropogoneae</taxon>
        <taxon>Sorghinae</taxon>
        <taxon>Sorghum</taxon>
    </lineage>
</organism>
<geneLocation type="chloroplast"/>
<accession>A1E9T1</accession>
<protein>
    <recommendedName>
        <fullName evidence="1">ATP synthase subunit beta, chloroplastic</fullName>
        <ecNumber evidence="1">7.1.2.2</ecNumber>
    </recommendedName>
    <alternativeName>
        <fullName evidence="1">ATP synthase F1 sector subunit beta</fullName>
    </alternativeName>
    <alternativeName>
        <fullName evidence="1">F-ATPase subunit beta</fullName>
    </alternativeName>
</protein>
<gene>
    <name evidence="1" type="primary">atpB</name>
</gene>
<dbReference type="EC" id="7.1.2.2" evidence="1"/>
<dbReference type="EMBL" id="EF115542">
    <property type="protein sequence ID" value="ABK79503.1"/>
    <property type="molecule type" value="Genomic_DNA"/>
</dbReference>
<dbReference type="RefSeq" id="YP_899414.1">
    <property type="nucleotide sequence ID" value="NC_008602.1"/>
</dbReference>
<dbReference type="SMR" id="A1E9T1"/>
<dbReference type="FunCoup" id="A1E9T1">
    <property type="interactions" value="319"/>
</dbReference>
<dbReference type="STRING" id="4558.A1E9T1"/>
<dbReference type="GeneID" id="4549166"/>
<dbReference type="KEGG" id="sbi:4549166"/>
<dbReference type="eggNOG" id="KOG1350">
    <property type="taxonomic scope" value="Eukaryota"/>
</dbReference>
<dbReference type="eggNOG" id="KOG1758">
    <property type="taxonomic scope" value="Eukaryota"/>
</dbReference>
<dbReference type="InParanoid" id="A1E9T1"/>
<dbReference type="OrthoDB" id="651731at2759"/>
<dbReference type="Proteomes" id="UP000000768">
    <property type="component" value="Chloroplast"/>
</dbReference>
<dbReference type="ExpressionAtlas" id="A1E9T1">
    <property type="expression patterns" value="baseline and differential"/>
</dbReference>
<dbReference type="GO" id="GO:0009535">
    <property type="term" value="C:chloroplast thylakoid membrane"/>
    <property type="evidence" value="ECO:0007669"/>
    <property type="project" value="UniProtKB-SubCell"/>
</dbReference>
<dbReference type="GO" id="GO:0005739">
    <property type="term" value="C:mitochondrion"/>
    <property type="evidence" value="ECO:0007669"/>
    <property type="project" value="GOC"/>
</dbReference>
<dbReference type="GO" id="GO:0045259">
    <property type="term" value="C:proton-transporting ATP synthase complex"/>
    <property type="evidence" value="ECO:0007669"/>
    <property type="project" value="UniProtKB-KW"/>
</dbReference>
<dbReference type="GO" id="GO:0005524">
    <property type="term" value="F:ATP binding"/>
    <property type="evidence" value="ECO:0007669"/>
    <property type="project" value="UniProtKB-UniRule"/>
</dbReference>
<dbReference type="GO" id="GO:0016887">
    <property type="term" value="F:ATP hydrolysis activity"/>
    <property type="evidence" value="ECO:0007669"/>
    <property type="project" value="InterPro"/>
</dbReference>
<dbReference type="GO" id="GO:0046933">
    <property type="term" value="F:proton-transporting ATP synthase activity, rotational mechanism"/>
    <property type="evidence" value="ECO:0007669"/>
    <property type="project" value="UniProtKB-UniRule"/>
</dbReference>
<dbReference type="GO" id="GO:0042776">
    <property type="term" value="P:proton motive force-driven mitochondrial ATP synthesis"/>
    <property type="evidence" value="ECO:0000318"/>
    <property type="project" value="GO_Central"/>
</dbReference>
<dbReference type="CDD" id="cd18110">
    <property type="entry name" value="ATP-synt_F1_beta_C"/>
    <property type="match status" value="1"/>
</dbReference>
<dbReference type="CDD" id="cd18115">
    <property type="entry name" value="ATP-synt_F1_beta_N"/>
    <property type="match status" value="1"/>
</dbReference>
<dbReference type="CDD" id="cd01133">
    <property type="entry name" value="F1-ATPase_beta_CD"/>
    <property type="match status" value="1"/>
</dbReference>
<dbReference type="FunFam" id="1.10.1140.10:FF:000001">
    <property type="entry name" value="ATP synthase subunit beta"/>
    <property type="match status" value="1"/>
</dbReference>
<dbReference type="FunFam" id="3.40.50.12240:FF:000006">
    <property type="entry name" value="ATP synthase subunit beta"/>
    <property type="match status" value="1"/>
</dbReference>
<dbReference type="FunFam" id="3.40.50.300:FF:000026">
    <property type="entry name" value="ATP synthase subunit beta"/>
    <property type="match status" value="1"/>
</dbReference>
<dbReference type="FunFam" id="2.40.10.170:FF:000002">
    <property type="entry name" value="ATP synthase subunit beta, chloroplastic"/>
    <property type="match status" value="1"/>
</dbReference>
<dbReference type="Gene3D" id="2.40.10.170">
    <property type="match status" value="1"/>
</dbReference>
<dbReference type="Gene3D" id="1.10.1140.10">
    <property type="entry name" value="Bovine Mitochondrial F1-atpase, Atp Synthase Beta Chain, Chain D, domain 3"/>
    <property type="match status" value="1"/>
</dbReference>
<dbReference type="Gene3D" id="3.40.50.300">
    <property type="entry name" value="P-loop containing nucleotide triphosphate hydrolases"/>
    <property type="match status" value="1"/>
</dbReference>
<dbReference type="HAMAP" id="MF_01347">
    <property type="entry name" value="ATP_synth_beta_bact"/>
    <property type="match status" value="1"/>
</dbReference>
<dbReference type="InterPro" id="IPR003593">
    <property type="entry name" value="AAA+_ATPase"/>
</dbReference>
<dbReference type="InterPro" id="IPR055190">
    <property type="entry name" value="ATP-synt_VA_C"/>
</dbReference>
<dbReference type="InterPro" id="IPR005722">
    <property type="entry name" value="ATP_synth_F1_bsu"/>
</dbReference>
<dbReference type="InterPro" id="IPR020003">
    <property type="entry name" value="ATPase_a/bsu_AS"/>
</dbReference>
<dbReference type="InterPro" id="IPR050053">
    <property type="entry name" value="ATPase_alpha/beta_chains"/>
</dbReference>
<dbReference type="InterPro" id="IPR004100">
    <property type="entry name" value="ATPase_F1/V1/A1_a/bsu_N"/>
</dbReference>
<dbReference type="InterPro" id="IPR036121">
    <property type="entry name" value="ATPase_F1/V1/A1_a/bsu_N_sf"/>
</dbReference>
<dbReference type="InterPro" id="IPR000194">
    <property type="entry name" value="ATPase_F1/V1/A1_a/bsu_nucl-bd"/>
</dbReference>
<dbReference type="InterPro" id="IPR024034">
    <property type="entry name" value="ATPase_F1/V1_b/a_C"/>
</dbReference>
<dbReference type="InterPro" id="IPR027417">
    <property type="entry name" value="P-loop_NTPase"/>
</dbReference>
<dbReference type="NCBIfam" id="TIGR01039">
    <property type="entry name" value="atpD"/>
    <property type="match status" value="1"/>
</dbReference>
<dbReference type="PANTHER" id="PTHR15184">
    <property type="entry name" value="ATP SYNTHASE"/>
    <property type="match status" value="1"/>
</dbReference>
<dbReference type="PANTHER" id="PTHR15184:SF71">
    <property type="entry name" value="ATP SYNTHASE SUBUNIT BETA, MITOCHONDRIAL"/>
    <property type="match status" value="1"/>
</dbReference>
<dbReference type="Pfam" id="PF00006">
    <property type="entry name" value="ATP-synt_ab"/>
    <property type="match status" value="1"/>
</dbReference>
<dbReference type="Pfam" id="PF02874">
    <property type="entry name" value="ATP-synt_ab_N"/>
    <property type="match status" value="1"/>
</dbReference>
<dbReference type="Pfam" id="PF22919">
    <property type="entry name" value="ATP-synt_VA_C"/>
    <property type="match status" value="1"/>
</dbReference>
<dbReference type="SMART" id="SM00382">
    <property type="entry name" value="AAA"/>
    <property type="match status" value="1"/>
</dbReference>
<dbReference type="SUPFAM" id="SSF47917">
    <property type="entry name" value="C-terminal domain of alpha and beta subunits of F1 ATP synthase"/>
    <property type="match status" value="1"/>
</dbReference>
<dbReference type="SUPFAM" id="SSF50615">
    <property type="entry name" value="N-terminal domain of alpha and beta subunits of F1 ATP synthase"/>
    <property type="match status" value="1"/>
</dbReference>
<dbReference type="SUPFAM" id="SSF52540">
    <property type="entry name" value="P-loop containing nucleoside triphosphate hydrolases"/>
    <property type="match status" value="1"/>
</dbReference>
<dbReference type="PROSITE" id="PS00152">
    <property type="entry name" value="ATPASE_ALPHA_BETA"/>
    <property type="match status" value="1"/>
</dbReference>
<keyword id="KW-0066">ATP synthesis</keyword>
<keyword id="KW-0067">ATP-binding</keyword>
<keyword id="KW-0139">CF(1)</keyword>
<keyword id="KW-0150">Chloroplast</keyword>
<keyword id="KW-0375">Hydrogen ion transport</keyword>
<keyword id="KW-0406">Ion transport</keyword>
<keyword id="KW-0472">Membrane</keyword>
<keyword id="KW-0547">Nucleotide-binding</keyword>
<keyword id="KW-0934">Plastid</keyword>
<keyword id="KW-1185">Reference proteome</keyword>
<keyword id="KW-0793">Thylakoid</keyword>
<keyword id="KW-1278">Translocase</keyword>
<keyword id="KW-0813">Transport</keyword>
<evidence type="ECO:0000255" key="1">
    <source>
        <dbReference type="HAMAP-Rule" id="MF_01347"/>
    </source>
</evidence>
<sequence>MRTNPTTSRPGVSTIEEKSVGRIDQIIGPVLDITFPPGKLPYIYNALIVKSRDTADKQINVTCEVQQLLGNNRVRAVAMSATDGLMRGMEVIDTGTPLSVPVGGATLGRIFNVLGEPIDNLGPVDTSATFPIHRSAPAFIELDTKLSIFETGIKVVDLLAPYRRGGKIGLFGGAGVGKTVLIMELINNIAKAHGGVSVFGGVGERTREGNDLYMEMKESGVINEKNIEESKVALVYGQMNEPPGARMRVGLTALTMAEYFRDVNKQDVLLFIDNIFRFVQAGSEVSALLGRMPSAVGYQPTLSTEMGSLQERITSTKKGSITSIQAVYVPADDLTDPAPATTFAHLDATTVLSRGLASKGIYPAVDPLDSTSTMLQPRIVGNEHYETAQRVKETLQRYKELQDIIAILGLDELSEEDRLTVARARKIERFLSQPFFVAEVFTGSPGKYVGLAETIRGFQLILSGELDGLPEQAFYLVGNIDEASTKAINLEEESKLKK</sequence>
<comment type="function">
    <text evidence="1">Produces ATP from ADP in the presence of a proton gradient across the membrane. The catalytic sites are hosted primarily by the beta subunits.</text>
</comment>
<comment type="catalytic activity">
    <reaction evidence="1">
        <text>ATP + H2O + 4 H(+)(in) = ADP + phosphate + 5 H(+)(out)</text>
        <dbReference type="Rhea" id="RHEA:57720"/>
        <dbReference type="ChEBI" id="CHEBI:15377"/>
        <dbReference type="ChEBI" id="CHEBI:15378"/>
        <dbReference type="ChEBI" id="CHEBI:30616"/>
        <dbReference type="ChEBI" id="CHEBI:43474"/>
        <dbReference type="ChEBI" id="CHEBI:456216"/>
        <dbReference type="EC" id="7.1.2.2"/>
    </reaction>
</comment>
<comment type="subunit">
    <text evidence="1">F-type ATPases have 2 components, CF(1) - the catalytic core - and CF(0) - the membrane proton channel. CF(1) has five subunits: alpha(3), beta(3), gamma(1), delta(1), epsilon(1). CF(0) has four main subunits: a(1), b(1), b'(1) and c(9-12).</text>
</comment>
<comment type="subcellular location">
    <subcellularLocation>
        <location evidence="1">Plastid</location>
        <location evidence="1">Chloroplast thylakoid membrane</location>
        <topology evidence="1">Peripheral membrane protein</topology>
    </subcellularLocation>
</comment>
<comment type="similarity">
    <text evidence="1">Belongs to the ATPase alpha/beta chains family.</text>
</comment>
<feature type="chain" id="PRO_0000275187" description="ATP synthase subunit beta, chloroplastic">
    <location>
        <begin position="1"/>
        <end position="498"/>
    </location>
</feature>
<feature type="binding site" evidence="1">
    <location>
        <begin position="172"/>
        <end position="179"/>
    </location>
    <ligand>
        <name>ATP</name>
        <dbReference type="ChEBI" id="CHEBI:30616"/>
    </ligand>
</feature>
<name>ATPB_SORBI</name>